<keyword id="KW-0349">Heme</keyword>
<keyword id="KW-0408">Iron</keyword>
<keyword id="KW-0479">Metal-binding</keyword>
<keyword id="KW-0561">Oxygen transport</keyword>
<keyword id="KW-1185">Reference proteome</keyword>
<keyword id="KW-0813">Transport</keyword>
<gene>
    <name type="primary">glbN</name>
    <name type="ordered locus">BQ2027_MB1569C</name>
</gene>
<sequence>MGLLSRLRKREPISIYDKIGGHEAIEVVVEDFYVRVLADDQLSAFFSGTNMSRLKGKQVEFFAAALGGPEPYTGAPMKQVHQGRGITMHHFSLVAGHLADALTAAGVPSETITEILGVIAPLAVDVTSGESTTAPV</sequence>
<comment type="function">
    <text>Binds oxygen cooperatively with very high affinity (P(50) = 0.013 mmHg at 20 degrees Celsius) because of a fast combination (25 microM(-1)sec(-1)) and a slow dissociation (0.2 sec(-1)) rate.</text>
</comment>
<comment type="cofactor">
    <cofactor evidence="1">
        <name>heme</name>
        <dbReference type="ChEBI" id="CHEBI:30413"/>
    </cofactor>
    <text evidence="1">Binds 1 heme group per subunit.</text>
</comment>
<comment type="subunit">
    <text evidence="3">Homodimer.</text>
</comment>
<comment type="similarity">
    <text evidence="4">Belongs to the truncated hemoglobin family. Group I subfamily.</text>
</comment>
<name>TRHBN_MYCBO</name>
<dbReference type="EMBL" id="AF130980">
    <property type="protein sequence ID" value="AAD28758.1"/>
    <property type="molecule type" value="Genomic_DNA"/>
</dbReference>
<dbReference type="EMBL" id="LT708304">
    <property type="protein sequence ID" value="SIU00172.1"/>
    <property type="molecule type" value="Genomic_DNA"/>
</dbReference>
<dbReference type="RefSeq" id="NP_855221.1">
    <property type="nucleotide sequence ID" value="NC_002945.3"/>
</dbReference>
<dbReference type="RefSeq" id="WP_003407730.1">
    <property type="nucleotide sequence ID" value="NC_002945.4"/>
</dbReference>
<dbReference type="BMRB" id="P0A593"/>
<dbReference type="SMR" id="P0A593"/>
<dbReference type="GeneID" id="45425525"/>
<dbReference type="KEGG" id="mbo:BQ2027_MB1569C"/>
<dbReference type="PATRIC" id="fig|233413.5.peg.1715"/>
<dbReference type="Proteomes" id="UP000001419">
    <property type="component" value="Chromosome"/>
</dbReference>
<dbReference type="GO" id="GO:0020037">
    <property type="term" value="F:heme binding"/>
    <property type="evidence" value="ECO:0007669"/>
    <property type="project" value="InterPro"/>
</dbReference>
<dbReference type="GO" id="GO:0046872">
    <property type="term" value="F:metal ion binding"/>
    <property type="evidence" value="ECO:0007669"/>
    <property type="project" value="UniProtKB-KW"/>
</dbReference>
<dbReference type="GO" id="GO:0019825">
    <property type="term" value="F:oxygen binding"/>
    <property type="evidence" value="ECO:0007669"/>
    <property type="project" value="InterPro"/>
</dbReference>
<dbReference type="GO" id="GO:0005344">
    <property type="term" value="F:oxygen carrier activity"/>
    <property type="evidence" value="ECO:0007669"/>
    <property type="project" value="UniProtKB-KW"/>
</dbReference>
<dbReference type="CDD" id="cd14756">
    <property type="entry name" value="TrHb"/>
    <property type="match status" value="1"/>
</dbReference>
<dbReference type="FunFam" id="1.10.490.10:FF:000010">
    <property type="entry name" value="Group 1 truncated hemoglobin"/>
    <property type="match status" value="1"/>
</dbReference>
<dbReference type="Gene3D" id="1.10.490.10">
    <property type="entry name" value="Globins"/>
    <property type="match status" value="1"/>
</dbReference>
<dbReference type="InterPro" id="IPR009050">
    <property type="entry name" value="Globin-like_sf"/>
</dbReference>
<dbReference type="InterPro" id="IPR012292">
    <property type="entry name" value="Globin/Proto"/>
</dbReference>
<dbReference type="InterPro" id="IPR019795">
    <property type="entry name" value="Globin_bac-like_CS"/>
</dbReference>
<dbReference type="InterPro" id="IPR001486">
    <property type="entry name" value="Hemoglobin_trunc"/>
</dbReference>
<dbReference type="InterPro" id="IPR016339">
    <property type="entry name" value="Hemoglobin_trunc_I"/>
</dbReference>
<dbReference type="Pfam" id="PF01152">
    <property type="entry name" value="Bac_globin"/>
    <property type="match status" value="1"/>
</dbReference>
<dbReference type="PIRSF" id="PIRSF002030">
    <property type="entry name" value="Globin_Protozoa/Cyanobacteria"/>
    <property type="match status" value="1"/>
</dbReference>
<dbReference type="SUPFAM" id="SSF46458">
    <property type="entry name" value="Globin-like"/>
    <property type="match status" value="1"/>
</dbReference>
<dbReference type="PROSITE" id="PS01213">
    <property type="entry name" value="GLOBIN_FAM_2"/>
    <property type="match status" value="1"/>
</dbReference>
<reference key="1">
    <citation type="journal article" date="1999" name="Proc. Natl. Acad. Sci. U.S.A.">
        <title>A cooperative oxygen-binding hemoglobin from Mycobacterium tuberculosis.</title>
        <authorList>
            <person name="Couture M."/>
            <person name="Yeh S.R."/>
            <person name="Wittenberg B.A."/>
            <person name="Wittenberg J.B."/>
            <person name="Ouellet Y."/>
            <person name="Rousseau D.L."/>
            <person name="Guertin M."/>
        </authorList>
    </citation>
    <scope>NUCLEOTIDE SEQUENCE [GENOMIC DNA]</scope>
    <scope>CHARACTERIZATION</scope>
    <scope>SUBUNIT</scope>
    <source>
        <strain>BCG</strain>
    </source>
</reference>
<reference key="2">
    <citation type="journal article" date="2003" name="Proc. Natl. Acad. Sci. U.S.A.">
        <title>The complete genome sequence of Mycobacterium bovis.</title>
        <authorList>
            <person name="Garnier T."/>
            <person name="Eiglmeier K."/>
            <person name="Camus J.-C."/>
            <person name="Medina N."/>
            <person name="Mansoor H."/>
            <person name="Pryor M."/>
            <person name="Duthoy S."/>
            <person name="Grondin S."/>
            <person name="Lacroix C."/>
            <person name="Monsempe C."/>
            <person name="Simon S."/>
            <person name="Harris B."/>
            <person name="Atkin R."/>
            <person name="Doggett J."/>
            <person name="Mayes R."/>
            <person name="Keating L."/>
            <person name="Wheeler P.R."/>
            <person name="Parkhill J."/>
            <person name="Barrell B.G."/>
            <person name="Cole S.T."/>
            <person name="Gordon S.V."/>
            <person name="Hewinson R.G."/>
        </authorList>
    </citation>
    <scope>NUCLEOTIDE SEQUENCE [LARGE SCALE GENOMIC DNA]</scope>
    <source>
        <strain>ATCC BAA-935 / AF2122/97</strain>
    </source>
</reference>
<reference key="3">
    <citation type="journal article" date="2017" name="Genome Announc.">
        <title>Updated reference genome sequence and annotation of Mycobacterium bovis AF2122/97.</title>
        <authorList>
            <person name="Malone K.M."/>
            <person name="Farrell D."/>
            <person name="Stuber T.P."/>
            <person name="Schubert O.T."/>
            <person name="Aebersold R."/>
            <person name="Robbe-Austerman S."/>
            <person name="Gordon S.V."/>
        </authorList>
    </citation>
    <scope>NUCLEOTIDE SEQUENCE [LARGE SCALE GENOMIC DNA]</scope>
    <scope>GENOME REANNOTATION</scope>
    <source>
        <strain>ATCC BAA-935 / AF2122/97</strain>
    </source>
</reference>
<protein>
    <recommendedName>
        <fullName>Group 1 truncated hemoglobin GlbN</fullName>
        <shortName>Truncated hemoglobin</shortName>
        <shortName>trHbN</shortName>
    </recommendedName>
    <alternativeName>
        <fullName>Hemoglobin-like protein HbN</fullName>
    </alternativeName>
</protein>
<accession>P0A593</accession>
<accession>A0A1R3XYL8</accession>
<accession>Q10784</accession>
<accession>X2BHW6</accession>
<proteinExistence type="evidence at protein level"/>
<organism>
    <name type="scientific">Mycobacterium bovis (strain ATCC BAA-935 / AF2122/97)</name>
    <dbReference type="NCBI Taxonomy" id="233413"/>
    <lineage>
        <taxon>Bacteria</taxon>
        <taxon>Bacillati</taxon>
        <taxon>Actinomycetota</taxon>
        <taxon>Actinomycetes</taxon>
        <taxon>Mycobacteriales</taxon>
        <taxon>Mycobacteriaceae</taxon>
        <taxon>Mycobacterium</taxon>
        <taxon>Mycobacterium tuberculosis complex</taxon>
    </lineage>
</organism>
<evidence type="ECO:0000250" key="1"/>
<evidence type="ECO:0000255" key="2"/>
<evidence type="ECO:0000269" key="3">
    <source>
    </source>
</evidence>
<evidence type="ECO:0000305" key="4"/>
<feature type="chain" id="PRO_0000162637" description="Group 1 truncated hemoglobin GlbN">
    <location>
        <begin position="1"/>
        <end position="136"/>
    </location>
</feature>
<feature type="binding site" description="proximal binding residue" evidence="2">
    <location>
        <position position="81"/>
    </location>
    <ligand>
        <name>heme</name>
        <dbReference type="ChEBI" id="CHEBI:30413"/>
    </ligand>
    <ligandPart>
        <name>Fe</name>
        <dbReference type="ChEBI" id="CHEBI:18248"/>
    </ligandPart>
</feature>